<name>SWS_DROGR</name>
<feature type="chain" id="PRO_0000389222" description="Neuropathy target esterase sws">
    <location>
        <begin position="1"/>
        <end position="1464"/>
    </location>
</feature>
<feature type="topological domain" description="Lumenal" evidence="3">
    <location>
        <begin position="1"/>
        <end position="34"/>
    </location>
</feature>
<feature type="transmembrane region" description="Helical" evidence="3">
    <location>
        <begin position="35"/>
        <end position="55"/>
    </location>
</feature>
<feature type="topological domain" description="Cytoplasmic" evidence="3">
    <location>
        <begin position="56"/>
        <end position="1464"/>
    </location>
</feature>
<feature type="domain" description="PNPLA" evidence="4">
    <location>
        <begin position="928"/>
        <end position="1094"/>
    </location>
</feature>
<feature type="region of interest" description="Disordered" evidence="5">
    <location>
        <begin position="329"/>
        <end position="393"/>
    </location>
</feature>
<feature type="region of interest" description="Disordered" evidence="5">
    <location>
        <begin position="409"/>
        <end position="438"/>
    </location>
</feature>
<feature type="region of interest" description="Disordered" evidence="5">
    <location>
        <begin position="1352"/>
        <end position="1374"/>
    </location>
</feature>
<feature type="region of interest" description="Disordered" evidence="5">
    <location>
        <begin position="1400"/>
        <end position="1464"/>
    </location>
</feature>
<feature type="short sequence motif" description="GXGXXG" evidence="4">
    <location>
        <begin position="932"/>
        <end position="937"/>
    </location>
</feature>
<feature type="short sequence motif" description="GXSXG" evidence="4">
    <location>
        <begin position="959"/>
        <end position="963"/>
    </location>
</feature>
<feature type="short sequence motif" description="DGA/G" evidence="4">
    <location>
        <begin position="1081"/>
        <end position="1083"/>
    </location>
</feature>
<feature type="compositionally biased region" description="Low complexity" evidence="5">
    <location>
        <begin position="338"/>
        <end position="367"/>
    </location>
</feature>
<feature type="compositionally biased region" description="Polar residues" evidence="5">
    <location>
        <begin position="409"/>
        <end position="420"/>
    </location>
</feature>
<feature type="compositionally biased region" description="Low complexity" evidence="5">
    <location>
        <begin position="422"/>
        <end position="438"/>
    </location>
</feature>
<feature type="compositionally biased region" description="Basic and acidic residues" evidence="5">
    <location>
        <begin position="1429"/>
        <end position="1444"/>
    </location>
</feature>
<feature type="compositionally biased region" description="Polar residues" evidence="5">
    <location>
        <begin position="1450"/>
        <end position="1464"/>
    </location>
</feature>
<feature type="active site" description="Nucleophile" evidence="4">
    <location>
        <position position="961"/>
    </location>
</feature>
<feature type="active site" description="Proton acceptor" evidence="4">
    <location>
        <position position="1081"/>
    </location>
</feature>
<feature type="binding site" evidence="3">
    <location>
        <begin position="176"/>
        <end position="303"/>
    </location>
    <ligand>
        <name>a nucleoside 3',5'-cyclic phosphate</name>
        <dbReference type="ChEBI" id="CHEBI:58464"/>
        <label>1</label>
    </ligand>
</feature>
<feature type="binding site" evidence="3">
    <location>
        <begin position="456"/>
        <end position="586"/>
    </location>
    <ligand>
        <name>a nucleoside 3',5'-cyclic phosphate</name>
        <dbReference type="ChEBI" id="CHEBI:58464"/>
        <label>2</label>
    </ligand>
</feature>
<feature type="binding site" evidence="3">
    <location>
        <begin position="575"/>
        <end position="702"/>
    </location>
    <ligand>
        <name>a nucleoside 3',5'-cyclic phosphate</name>
        <dbReference type="ChEBI" id="CHEBI:58464"/>
        <label>3</label>
    </ligand>
</feature>
<feature type="modified residue" description="Phosphoserine" evidence="2">
    <location>
        <position position="421"/>
    </location>
</feature>
<feature type="modified residue" description="Phosphoserine" evidence="2">
    <location>
        <position position="1175"/>
    </location>
</feature>
<sequence>MDVLELLRASATGCYNTIFSEAWHQYVHKQIAAAVYWYGALFLLGVLLFVWFLYFKRLARLRLRDEIARSLSAVTSAATGVDHRGLRFRKRDKMLFYGRRMLRKMKNVSGQMYSSGKGYKRRAVMRFARRILQLQRENRPLEMKTVEPPAEYLEETIEGSDRVPPDALYMLQSIRIFGHFEKPIFLKLCKHTQILQLMAGDYLFKITDPDDSVYIVQSGMINVYICNADGSTLSLKTVRKGESVTSLLSFIDVLSGNSSYYKTVTAKAIEKSVVIRLPMQAFEEVFDENPDVMIRVIQVIMIRLQRVLFTALRNYLGLNAELVQNHMRNKNSSNPMATGQTTSNVQSQTSQATQSRPSGTTRTPTSPMLRLSREEHTLSDPDPNPNANNLHYHEMHGDAPYIDLYHYQQQQQSLNSPRRNSTAHVSEAAAASTASSPTTIDQRLVQSSAVDSLRRELGLGEEDAHIIEQFVLVRELEPNVTLITEGNADDVCIWFVMTGNLAVYQSNADATRASAKQDAKPEMLIHFVHPGEIVGGLAMLTGEASAYTIRSRNNSRVAFIRRAAIYQIMRQRPRIVLGLGNGVVRRLSPLVRQCDYALDWIFLESGRAVYRQDESSDSTYIVLSGRMRSVITQPNGKKEIVGEYGKGDLVGIVEMITETSRTTTVMAVRDSELAKLPEGLFNAIKLRYPIVVTRLISFLSHRFLGSMQTRGSNAYGTPVEANPVTHKYSTVALVPITDDVPLTPFTYELYHSLCAIGPVLRLTSEVVGKQLGVNIFDTANEYRLTSWLAQQEDRNIITLYQCDSSLSPWTQRCMRQADVILIVGLGERSHLVGKFEREIDKLAMRTQKELVLLYPETTNAKPANTLSWLNARPWVTKHHHVLCVKRIFTRKSQYRINDLYSRVLLSEPNMHSDFSRLARWLTGNSIGLVLGGGGARGAAHIGMLKAIQEAGIPIDMVGGVSIGALMGALWCSERNITTVTQKAREWSKKMTKWFLQLLDLTYPITSMFSGREFNKTIHDTFGDVTIEDLWIPYFTLTTDITASCHRIHTNGSLWRFVRSSMSLSGYMPPLCDPQDGHLLLDGGYVNNLPGHLWRYCRASMSIAGVFPPFCDYRDGHLLLDGCYTNNVPADVMHNLGAAHIIAIDVGSQDDTDLTNYGDDLSGWWLLYKKWNPFTSPVKVPDLPDIQSRLAYVSCVRQLEEVKNSDYCEYIRPPIDKYKTLAFGSFDEIRDVGYVFGKNYFDTMAKAGRLGRFNQWFNKEPPKRGNHASLNEYTFIDLAQIVCKLPETYVRLGTPDLFSEDEDEDFDGYISEPTTLNTDRRRIQVHRAGNSLSFSEAELDSDVELDLEMENKVDKATQSTPTLPDKRSVQTPTPSLFNLTMPIAVDEIDKSSGRVKRKLEATNTASIAEPEASPSIKAEATTQTTPPTSKRTEQDEHELEHEQVVEKQQVMDKQQGNTTNNDTKN</sequence>
<protein>
    <recommendedName>
        <fullName evidence="2">Neuropathy target esterase sws</fullName>
    </recommendedName>
    <alternativeName>
        <fullName evidence="2">Swiss cheese</fullName>
        <ecNumber>3.1.1.5</ecNumber>
    </alternativeName>
</protein>
<keyword id="KW-0217">Developmental protein</keyword>
<keyword id="KW-0256">Endoplasmic reticulum</keyword>
<keyword id="KW-0378">Hydrolase</keyword>
<keyword id="KW-0442">Lipid degradation</keyword>
<keyword id="KW-0443">Lipid metabolism</keyword>
<keyword id="KW-0472">Membrane</keyword>
<keyword id="KW-0524">Neurogenesis</keyword>
<keyword id="KW-0597">Phosphoprotein</keyword>
<keyword id="KW-1185">Reference proteome</keyword>
<keyword id="KW-0812">Transmembrane</keyword>
<keyword id="KW-1133">Transmembrane helix</keyword>
<reference evidence="6" key="1">
    <citation type="journal article" date="2007" name="Nature">
        <title>Evolution of genes and genomes on the Drosophila phylogeny.</title>
        <authorList>
            <consortium name="Drosophila 12 genomes consortium"/>
        </authorList>
    </citation>
    <scope>NUCLEOTIDE SEQUENCE [LARGE SCALE GENOMIC DNA]</scope>
    <source>
        <strain evidence="6">Tucson 15287-2541.00</strain>
    </source>
</reference>
<accession>B4JLX2</accession>
<evidence type="ECO:0000250" key="1"/>
<evidence type="ECO:0000250" key="2">
    <source>
        <dbReference type="UniProtKB" id="Q9U969"/>
    </source>
</evidence>
<evidence type="ECO:0000255" key="3"/>
<evidence type="ECO:0000255" key="4">
    <source>
        <dbReference type="PROSITE-ProRule" id="PRU01161"/>
    </source>
</evidence>
<evidence type="ECO:0000256" key="5">
    <source>
        <dbReference type="SAM" id="MobiDB-lite"/>
    </source>
</evidence>
<evidence type="ECO:0000312" key="6">
    <source>
        <dbReference type="EMBL" id="EDV91733.1"/>
    </source>
</evidence>
<comment type="function">
    <text evidence="2">Phospholipase B that deacylates intracellular phosphatidylcholine (PtdCho), generating glycerophosphocholine (GroPtdCho). This deacylation occurs at both sn-2 and sn-1 positions of PtdCho. Its specific chemical modification by certain organophosphorus (OP) compounds leads to distal axonopathy. Plays a role in the signaling mechanism between neurons and glia that regulates glia wrapping during development of the adult brain. Essential for membrane lipid homeostasis and cell survival in both neurons and glia of the adult brain (By similarity).</text>
</comment>
<comment type="catalytic activity">
    <reaction evidence="2">
        <text>a 1-acyl-sn-glycero-3-phosphocholine + H2O = sn-glycerol 3-phosphocholine + a fatty acid + H(+)</text>
        <dbReference type="Rhea" id="RHEA:15177"/>
        <dbReference type="ChEBI" id="CHEBI:15377"/>
        <dbReference type="ChEBI" id="CHEBI:15378"/>
        <dbReference type="ChEBI" id="CHEBI:16870"/>
        <dbReference type="ChEBI" id="CHEBI:28868"/>
        <dbReference type="ChEBI" id="CHEBI:58168"/>
        <dbReference type="EC" id="3.1.1.5"/>
    </reaction>
</comment>
<comment type="subunit">
    <text evidence="1">Interacts with Pka-C3; interaction inhibits the catalytic function of Pka-C3 and the esterase activity of sws.</text>
</comment>
<comment type="subcellular location">
    <subcellularLocation>
        <location evidence="2">Endoplasmic reticulum membrane</location>
        <topology evidence="2">Single-pass type I membrane protein</topology>
    </subcellularLocation>
    <text evidence="2">Sws tethers Pka-C3 to the membrane.</text>
</comment>
<comment type="similarity">
    <text evidence="3">Belongs to the NTE family.</text>
</comment>
<proteinExistence type="inferred from homology"/>
<dbReference type="EC" id="3.1.1.5"/>
<dbReference type="EMBL" id="CH916371">
    <property type="protein sequence ID" value="EDV91733.1"/>
    <property type="molecule type" value="Genomic_DNA"/>
</dbReference>
<dbReference type="RefSeq" id="XP_001992026.1">
    <property type="nucleotide sequence ID" value="XM_001991990.1"/>
</dbReference>
<dbReference type="SMR" id="B4JLX2"/>
<dbReference type="FunCoup" id="B4JLX2">
    <property type="interactions" value="509"/>
</dbReference>
<dbReference type="STRING" id="7222.B4JLX2"/>
<dbReference type="eggNOG" id="KOG2968">
    <property type="taxonomic scope" value="Eukaryota"/>
</dbReference>
<dbReference type="HOGENOM" id="CLU_000960_1_0_1"/>
<dbReference type="InParanoid" id="B4JLX2"/>
<dbReference type="OMA" id="GQQEDRH"/>
<dbReference type="OrthoDB" id="421051at2759"/>
<dbReference type="PhylomeDB" id="B4JLX2"/>
<dbReference type="Proteomes" id="UP000001070">
    <property type="component" value="Unassembled WGS sequence"/>
</dbReference>
<dbReference type="GO" id="GO:0005789">
    <property type="term" value="C:endoplasmic reticulum membrane"/>
    <property type="evidence" value="ECO:0000250"/>
    <property type="project" value="UniProtKB"/>
</dbReference>
<dbReference type="GO" id="GO:0004622">
    <property type="term" value="F:lysophospholipase activity"/>
    <property type="evidence" value="ECO:0000250"/>
    <property type="project" value="UniProtKB"/>
</dbReference>
<dbReference type="GO" id="GO:0034349">
    <property type="term" value="P:glial cell apoptotic process"/>
    <property type="evidence" value="ECO:0000250"/>
    <property type="project" value="UniProtKB"/>
</dbReference>
<dbReference type="GO" id="GO:0016042">
    <property type="term" value="P:lipid catabolic process"/>
    <property type="evidence" value="ECO:0007669"/>
    <property type="project" value="UniProtKB-KW"/>
</dbReference>
<dbReference type="GO" id="GO:0006643">
    <property type="term" value="P:membrane lipid metabolic process"/>
    <property type="evidence" value="ECO:0000250"/>
    <property type="project" value="UniProtKB"/>
</dbReference>
<dbReference type="GO" id="GO:0061024">
    <property type="term" value="P:membrane organization"/>
    <property type="evidence" value="ECO:0000250"/>
    <property type="project" value="UniProtKB"/>
</dbReference>
<dbReference type="GO" id="GO:0007399">
    <property type="term" value="P:nervous system development"/>
    <property type="evidence" value="ECO:0007669"/>
    <property type="project" value="UniProtKB-KW"/>
</dbReference>
<dbReference type="GO" id="GO:0051402">
    <property type="term" value="P:neuron apoptotic process"/>
    <property type="evidence" value="ECO:0000250"/>
    <property type="project" value="UniProtKB"/>
</dbReference>
<dbReference type="GO" id="GO:0046470">
    <property type="term" value="P:phosphatidylcholine metabolic process"/>
    <property type="evidence" value="ECO:0000250"/>
    <property type="project" value="UniProtKB"/>
</dbReference>
<dbReference type="CDD" id="cd00038">
    <property type="entry name" value="CAP_ED"/>
    <property type="match status" value="3"/>
</dbReference>
<dbReference type="CDD" id="cd07225">
    <property type="entry name" value="Pat_PNPLA6_PNPLA7"/>
    <property type="match status" value="1"/>
</dbReference>
<dbReference type="FunFam" id="2.60.120.10:FF:000010">
    <property type="entry name" value="neuropathy target esterase isoform X1"/>
    <property type="match status" value="1"/>
</dbReference>
<dbReference type="FunFam" id="2.60.120.10:FF:000122">
    <property type="entry name" value="Neuropathy target esterase sws"/>
    <property type="match status" value="1"/>
</dbReference>
<dbReference type="FunFam" id="2.60.120.10:FF:000135">
    <property type="entry name" value="Neuropathy target esterase sws"/>
    <property type="match status" value="1"/>
</dbReference>
<dbReference type="FunFam" id="3.40.1090.10:FF:000022">
    <property type="entry name" value="Neuropathy target esterase sws"/>
    <property type="match status" value="1"/>
</dbReference>
<dbReference type="FunFam" id="3.40.1090.10:FF:000033">
    <property type="entry name" value="Neuropathy target esterase sws"/>
    <property type="match status" value="1"/>
</dbReference>
<dbReference type="Gene3D" id="3.40.1090.10">
    <property type="entry name" value="Cytosolic phospholipase A2 catalytic domain"/>
    <property type="match status" value="2"/>
</dbReference>
<dbReference type="Gene3D" id="2.60.120.10">
    <property type="entry name" value="Jelly Rolls"/>
    <property type="match status" value="3"/>
</dbReference>
<dbReference type="InterPro" id="IPR016035">
    <property type="entry name" value="Acyl_Trfase/lysoPLipase"/>
</dbReference>
<dbReference type="InterPro" id="IPR000595">
    <property type="entry name" value="cNMP-bd_dom"/>
</dbReference>
<dbReference type="InterPro" id="IPR018490">
    <property type="entry name" value="cNMP-bd_dom_sf"/>
</dbReference>
<dbReference type="InterPro" id="IPR001423">
    <property type="entry name" value="LysoPLipase_patatin_CS"/>
</dbReference>
<dbReference type="InterPro" id="IPR050301">
    <property type="entry name" value="NTE"/>
</dbReference>
<dbReference type="InterPro" id="IPR056556">
    <property type="entry name" value="NTE1_P-loop_dom"/>
</dbReference>
<dbReference type="InterPro" id="IPR002641">
    <property type="entry name" value="PNPLA_dom"/>
</dbReference>
<dbReference type="InterPro" id="IPR014710">
    <property type="entry name" value="RmlC-like_jellyroll"/>
</dbReference>
<dbReference type="PANTHER" id="PTHR14226:SF29">
    <property type="entry name" value="NEUROPATHY TARGET ESTERASE SWS"/>
    <property type="match status" value="1"/>
</dbReference>
<dbReference type="PANTHER" id="PTHR14226">
    <property type="entry name" value="NEUROPATHY TARGET ESTERASE/SWISS CHEESE D.MELANOGASTER"/>
    <property type="match status" value="1"/>
</dbReference>
<dbReference type="Pfam" id="PF00027">
    <property type="entry name" value="cNMP_binding"/>
    <property type="match status" value="3"/>
</dbReference>
<dbReference type="Pfam" id="PF24179">
    <property type="entry name" value="NTE_Ploop"/>
    <property type="match status" value="1"/>
</dbReference>
<dbReference type="Pfam" id="PF01734">
    <property type="entry name" value="Patatin"/>
    <property type="match status" value="1"/>
</dbReference>
<dbReference type="SMART" id="SM00100">
    <property type="entry name" value="cNMP"/>
    <property type="match status" value="2"/>
</dbReference>
<dbReference type="SUPFAM" id="SSF51206">
    <property type="entry name" value="cAMP-binding domain-like"/>
    <property type="match status" value="3"/>
</dbReference>
<dbReference type="SUPFAM" id="SSF52151">
    <property type="entry name" value="FabD/lysophospholipase-like"/>
    <property type="match status" value="2"/>
</dbReference>
<dbReference type="PROSITE" id="PS50042">
    <property type="entry name" value="CNMP_BINDING_3"/>
    <property type="match status" value="3"/>
</dbReference>
<dbReference type="PROSITE" id="PS51635">
    <property type="entry name" value="PNPLA"/>
    <property type="match status" value="1"/>
</dbReference>
<dbReference type="PROSITE" id="PS01237">
    <property type="entry name" value="UPF0028"/>
    <property type="match status" value="1"/>
</dbReference>
<organism>
    <name type="scientific">Drosophila grimshawi</name>
    <name type="common">Hawaiian fruit fly</name>
    <name type="synonym">Idiomyia grimshawi</name>
    <dbReference type="NCBI Taxonomy" id="7222"/>
    <lineage>
        <taxon>Eukaryota</taxon>
        <taxon>Metazoa</taxon>
        <taxon>Ecdysozoa</taxon>
        <taxon>Arthropoda</taxon>
        <taxon>Hexapoda</taxon>
        <taxon>Insecta</taxon>
        <taxon>Pterygota</taxon>
        <taxon>Neoptera</taxon>
        <taxon>Endopterygota</taxon>
        <taxon>Diptera</taxon>
        <taxon>Brachycera</taxon>
        <taxon>Muscomorpha</taxon>
        <taxon>Ephydroidea</taxon>
        <taxon>Drosophilidae</taxon>
        <taxon>Drosophila</taxon>
        <taxon>Hawaiian Drosophila</taxon>
    </lineage>
</organism>
<gene>
    <name evidence="2" type="primary">sws</name>
    <name type="ORF">GH24540</name>
</gene>